<keyword id="KW-0963">Cytoplasm</keyword>
<keyword id="KW-0206">Cytoskeleton</keyword>
<keyword id="KW-0342">GTP-binding</keyword>
<keyword id="KW-0460">Magnesium</keyword>
<keyword id="KW-0479">Metal-binding</keyword>
<keyword id="KW-0493">Microtubule</keyword>
<keyword id="KW-0547">Nucleotide-binding</keyword>
<feature type="chain" id="PRO_0000048284" description="Tubulin beta-1 chain">
    <location>
        <begin position="1"/>
        <end position="448"/>
    </location>
</feature>
<feature type="region of interest" description="Disordered" evidence="3">
    <location>
        <begin position="427"/>
        <end position="448"/>
    </location>
</feature>
<feature type="compositionally biased region" description="Acidic residues" evidence="3">
    <location>
        <begin position="429"/>
        <end position="448"/>
    </location>
</feature>
<feature type="binding site" evidence="2">
    <location>
        <position position="11"/>
    </location>
    <ligand>
        <name>GTP</name>
        <dbReference type="ChEBI" id="CHEBI:37565"/>
    </ligand>
</feature>
<feature type="binding site" evidence="1">
    <location>
        <position position="69"/>
    </location>
    <ligand>
        <name>GTP</name>
        <dbReference type="ChEBI" id="CHEBI:37565"/>
    </ligand>
</feature>
<feature type="binding site" evidence="1">
    <location>
        <position position="69"/>
    </location>
    <ligand>
        <name>Mg(2+)</name>
        <dbReference type="ChEBI" id="CHEBI:18420"/>
    </ligand>
</feature>
<feature type="binding site" evidence="2">
    <location>
        <position position="138"/>
    </location>
    <ligand>
        <name>GTP</name>
        <dbReference type="ChEBI" id="CHEBI:37565"/>
    </ligand>
</feature>
<feature type="binding site" evidence="2">
    <location>
        <position position="142"/>
    </location>
    <ligand>
        <name>GTP</name>
        <dbReference type="ChEBI" id="CHEBI:37565"/>
    </ligand>
</feature>
<feature type="binding site" evidence="2">
    <location>
        <position position="143"/>
    </location>
    <ligand>
        <name>GTP</name>
        <dbReference type="ChEBI" id="CHEBI:37565"/>
    </ligand>
</feature>
<feature type="binding site" evidence="2">
    <location>
        <position position="144"/>
    </location>
    <ligand>
        <name>GTP</name>
        <dbReference type="ChEBI" id="CHEBI:37565"/>
    </ligand>
</feature>
<feature type="binding site" evidence="2">
    <location>
        <position position="204"/>
    </location>
    <ligand>
        <name>GTP</name>
        <dbReference type="ChEBI" id="CHEBI:37565"/>
    </ligand>
</feature>
<feature type="binding site" evidence="2">
    <location>
        <position position="226"/>
    </location>
    <ligand>
        <name>GTP</name>
        <dbReference type="ChEBI" id="CHEBI:37565"/>
    </ligand>
</feature>
<organism>
    <name type="scientific">Brugia pahangi</name>
    <name type="common">Filarial nematode worm</name>
    <dbReference type="NCBI Taxonomy" id="6280"/>
    <lineage>
        <taxon>Eukaryota</taxon>
        <taxon>Metazoa</taxon>
        <taxon>Ecdysozoa</taxon>
        <taxon>Nematoda</taxon>
        <taxon>Chromadorea</taxon>
        <taxon>Rhabditida</taxon>
        <taxon>Spirurina</taxon>
        <taxon>Spiruromorpha</taxon>
        <taxon>Filarioidea</taxon>
        <taxon>Onchocercidae</taxon>
        <taxon>Brugia</taxon>
    </lineage>
</organism>
<name>TBB1_BRUPA</name>
<comment type="function">
    <text>Tubulin is the major constituent of microtubules, a cylinder consisting of laterally associated linear protofilaments composed of alpha- and beta-tubulin heterodimers. Microtubules grow by the addition of GTP-tubulin dimers to the microtubule end, where a stabilizing cap forms. Below the cap, tubulin dimers are in GDP-bound state, owing to GTPase activity of alpha-tubulin.</text>
</comment>
<comment type="cofactor">
    <cofactor evidence="1">
        <name>Mg(2+)</name>
        <dbReference type="ChEBI" id="CHEBI:18420"/>
    </cofactor>
</comment>
<comment type="subunit">
    <text>Dimer of alpha and beta chains. A typical microtubule is a hollow water-filled tube with an outer diameter of 25 nm and an inner diameter of 15 nM. Alpha-beta heterodimers associate head-to-tail to form protofilaments running lengthwise along the microtubule wall with the beta-tubulin subunit facing the microtubule plus end conferring a structural polarity. Microtubules usually have 13 protofilaments but different protofilament numbers can be found in some organisms and specialized cells.</text>
</comment>
<comment type="subcellular location">
    <subcellularLocation>
        <location>Cytoplasm</location>
        <location>Cytoskeleton</location>
    </subcellularLocation>
</comment>
<comment type="similarity">
    <text evidence="4">Belongs to the tubulin family.</text>
</comment>
<dbReference type="EMBL" id="M36380">
    <property type="protein sequence ID" value="AAA27865.1"/>
    <property type="molecule type" value="Genomic_DNA"/>
</dbReference>
<dbReference type="PIR" id="A60645">
    <property type="entry name" value="A60645"/>
</dbReference>
<dbReference type="SMR" id="P18241"/>
<dbReference type="STRING" id="6280.P18241"/>
<dbReference type="GO" id="GO:0005737">
    <property type="term" value="C:cytoplasm"/>
    <property type="evidence" value="ECO:0007669"/>
    <property type="project" value="UniProtKB-KW"/>
</dbReference>
<dbReference type="GO" id="GO:0005874">
    <property type="term" value="C:microtubule"/>
    <property type="evidence" value="ECO:0007669"/>
    <property type="project" value="UniProtKB-KW"/>
</dbReference>
<dbReference type="GO" id="GO:0005525">
    <property type="term" value="F:GTP binding"/>
    <property type="evidence" value="ECO:0007669"/>
    <property type="project" value="UniProtKB-KW"/>
</dbReference>
<dbReference type="GO" id="GO:0003924">
    <property type="term" value="F:GTPase activity"/>
    <property type="evidence" value="ECO:0007669"/>
    <property type="project" value="InterPro"/>
</dbReference>
<dbReference type="GO" id="GO:0046872">
    <property type="term" value="F:metal ion binding"/>
    <property type="evidence" value="ECO:0007669"/>
    <property type="project" value="UniProtKB-KW"/>
</dbReference>
<dbReference type="GO" id="GO:0005200">
    <property type="term" value="F:structural constituent of cytoskeleton"/>
    <property type="evidence" value="ECO:0007669"/>
    <property type="project" value="InterPro"/>
</dbReference>
<dbReference type="GO" id="GO:0007017">
    <property type="term" value="P:microtubule-based process"/>
    <property type="evidence" value="ECO:0007669"/>
    <property type="project" value="InterPro"/>
</dbReference>
<dbReference type="CDD" id="cd02187">
    <property type="entry name" value="beta_tubulin"/>
    <property type="match status" value="1"/>
</dbReference>
<dbReference type="FunFam" id="1.10.287.600:FF:000002">
    <property type="entry name" value="Tubulin beta chain"/>
    <property type="match status" value="1"/>
</dbReference>
<dbReference type="FunFam" id="3.30.1330.20:FF:000002">
    <property type="entry name" value="Tubulin beta chain"/>
    <property type="match status" value="1"/>
</dbReference>
<dbReference type="FunFam" id="3.40.50.1440:FF:000003">
    <property type="entry name" value="Tubulin beta chain"/>
    <property type="match status" value="1"/>
</dbReference>
<dbReference type="Gene3D" id="1.10.287.600">
    <property type="entry name" value="Helix hairpin bin"/>
    <property type="match status" value="1"/>
</dbReference>
<dbReference type="Gene3D" id="3.30.1330.20">
    <property type="entry name" value="Tubulin/FtsZ, C-terminal domain"/>
    <property type="match status" value="1"/>
</dbReference>
<dbReference type="Gene3D" id="3.40.50.1440">
    <property type="entry name" value="Tubulin/FtsZ, GTPase domain"/>
    <property type="match status" value="1"/>
</dbReference>
<dbReference type="InterPro" id="IPR013838">
    <property type="entry name" value="Beta-tubulin_BS"/>
</dbReference>
<dbReference type="InterPro" id="IPR002453">
    <property type="entry name" value="Beta_tubulin"/>
</dbReference>
<dbReference type="InterPro" id="IPR008280">
    <property type="entry name" value="Tub_FtsZ_C"/>
</dbReference>
<dbReference type="InterPro" id="IPR000217">
    <property type="entry name" value="Tubulin"/>
</dbReference>
<dbReference type="InterPro" id="IPR037103">
    <property type="entry name" value="Tubulin/FtsZ-like_C"/>
</dbReference>
<dbReference type="InterPro" id="IPR018316">
    <property type="entry name" value="Tubulin/FtsZ_2-layer-sand-dom"/>
</dbReference>
<dbReference type="InterPro" id="IPR036525">
    <property type="entry name" value="Tubulin/FtsZ_GTPase_sf"/>
</dbReference>
<dbReference type="InterPro" id="IPR023123">
    <property type="entry name" value="Tubulin_C"/>
</dbReference>
<dbReference type="InterPro" id="IPR017975">
    <property type="entry name" value="Tubulin_CS"/>
</dbReference>
<dbReference type="InterPro" id="IPR003008">
    <property type="entry name" value="Tubulin_FtsZ_GTPase"/>
</dbReference>
<dbReference type="PANTHER" id="PTHR11588">
    <property type="entry name" value="TUBULIN"/>
    <property type="match status" value="1"/>
</dbReference>
<dbReference type="Pfam" id="PF00091">
    <property type="entry name" value="Tubulin"/>
    <property type="match status" value="1"/>
</dbReference>
<dbReference type="Pfam" id="PF03953">
    <property type="entry name" value="Tubulin_C"/>
    <property type="match status" value="1"/>
</dbReference>
<dbReference type="PRINTS" id="PR01163">
    <property type="entry name" value="BETATUBULIN"/>
</dbReference>
<dbReference type="PRINTS" id="PR01161">
    <property type="entry name" value="TUBULIN"/>
</dbReference>
<dbReference type="SMART" id="SM00864">
    <property type="entry name" value="Tubulin"/>
    <property type="match status" value="1"/>
</dbReference>
<dbReference type="SMART" id="SM00865">
    <property type="entry name" value="Tubulin_C"/>
    <property type="match status" value="1"/>
</dbReference>
<dbReference type="SUPFAM" id="SSF55307">
    <property type="entry name" value="Tubulin C-terminal domain-like"/>
    <property type="match status" value="1"/>
</dbReference>
<dbReference type="SUPFAM" id="SSF52490">
    <property type="entry name" value="Tubulin nucleotide-binding domain-like"/>
    <property type="match status" value="1"/>
</dbReference>
<dbReference type="PROSITE" id="PS00227">
    <property type="entry name" value="TUBULIN"/>
    <property type="match status" value="1"/>
</dbReference>
<dbReference type="PROSITE" id="PS00228">
    <property type="entry name" value="TUBULIN_B_AUTOREG"/>
    <property type="match status" value="1"/>
</dbReference>
<protein>
    <recommendedName>
        <fullName>Tubulin beta-1 chain</fullName>
    </recommendedName>
    <alternativeName>
        <fullName>Beta-1-tubulin</fullName>
    </alternativeName>
</protein>
<evidence type="ECO:0000250" key="1">
    <source>
        <dbReference type="UniProtKB" id="P68363"/>
    </source>
</evidence>
<evidence type="ECO:0000250" key="2">
    <source>
        <dbReference type="UniProtKB" id="Q13509"/>
    </source>
</evidence>
<evidence type="ECO:0000256" key="3">
    <source>
        <dbReference type="SAM" id="MobiDB-lite"/>
    </source>
</evidence>
<evidence type="ECO:0000305" key="4"/>
<accession>P18241</accession>
<proteinExistence type="inferred from homology"/>
<sequence>MREIVHVQAGQCGNQIGAKFWEVISDEHGVQPDGTYKGDSDLQIERINVYYNEANGGKYVPRAVLVDLEPGTMDSIRGGEFGQLFRPDNFVFGQSGAGNNWAKGHYTEGAELVDNVLDVIRKEAEGCDCLQGFQLTHSLGGGTGSGMGTLLISKIREEYPDRIMSSFSVVPSPKVSDVVLEPYNATLSVHQLVENTDETFCIDNEALYDICFRTLKLANPTYGDLNHLVSVTMSGVTTCLRFPGQLNADLRKLAVNMVPFPRLHFFMPGFAPLSARDAAAYRALNVAELTQQMFDAKNMMAACDPRHGRYLTVAAMFRGRMSMREVDEQMMQVQNKNSSYFVEWIPNNVKTAVCDIPPRGLKMSATFIGNTTAIQELFKRISEQFTAMFRRKAFLHWYTGEGMDEMEFTEAESNMNDLVSEYQQYQDATADEEGDLQEGESEYIEQEE</sequence>
<reference key="1">
    <citation type="journal article" date="1991" name="Mol. Biochem. Parasitol.">
        <title>Characterization of a beta-tubulin gene and a beta-tubulin gene products of Brugia pahangi.</title>
        <authorList>
            <person name="Guenette S."/>
            <person name="Prichard R.K."/>
            <person name="Klein R.D."/>
            <person name="Matlashewski G."/>
        </authorList>
    </citation>
    <scope>NUCLEOTIDE SEQUENCE [GENOMIC DNA]</scope>
</reference>
<reference key="2">
    <citation type="journal article" date="1989" name="Parasite Immunol.">
        <title>Localization and immunogenicity of tubulin in the filarial nematodes Brugia malayi and B. pahangi.</title>
        <authorList>
            <person name="Helm R."/>
            <person name="Selkirk M.E."/>
            <person name="Bradley J.E."/>
            <person name="Burns R.G."/>
            <person name="Hamilton A.J."/>
            <person name="Croft S."/>
            <person name="Maizels R.M."/>
        </authorList>
    </citation>
    <scope>NUCLEOTIDE SEQUENCE [GENOMIC DNA] OF 409-448</scope>
</reference>